<accession>A6L3I9</accession>
<proteinExistence type="inferred from homology"/>
<gene>
    <name evidence="1" type="primary">rlmN</name>
    <name type="ordered locus">BVU_2598</name>
</gene>
<reference key="1">
    <citation type="journal article" date="2007" name="PLoS Biol.">
        <title>Evolution of symbiotic bacteria in the distal human intestine.</title>
        <authorList>
            <person name="Xu J."/>
            <person name="Mahowald M.A."/>
            <person name="Ley R.E."/>
            <person name="Lozupone C.A."/>
            <person name="Hamady M."/>
            <person name="Martens E.C."/>
            <person name="Henrissat B."/>
            <person name="Coutinho P.M."/>
            <person name="Minx P."/>
            <person name="Latreille P."/>
            <person name="Cordum H."/>
            <person name="Van Brunt A."/>
            <person name="Kim K."/>
            <person name="Fulton R.S."/>
            <person name="Fulton L.A."/>
            <person name="Clifton S.W."/>
            <person name="Wilson R.K."/>
            <person name="Knight R.D."/>
            <person name="Gordon J.I."/>
        </authorList>
    </citation>
    <scope>NUCLEOTIDE SEQUENCE [LARGE SCALE GENOMIC DNA]</scope>
    <source>
        <strain>ATCC 8482 / DSM 1447 / JCM 5826 / CCUG 4940 / NBRC 14291 / NCTC 11154</strain>
    </source>
</reference>
<feature type="chain" id="PRO_0000350043" description="Probable dual-specificity RNA methyltransferase RlmN">
    <location>
        <begin position="1"/>
        <end position="349"/>
    </location>
</feature>
<feature type="domain" description="Radical SAM core" evidence="2">
    <location>
        <begin position="100"/>
        <end position="321"/>
    </location>
</feature>
<feature type="active site" description="Proton acceptor" evidence="1">
    <location>
        <position position="94"/>
    </location>
</feature>
<feature type="active site" description="S-methylcysteine intermediate" evidence="1">
    <location>
        <position position="332"/>
    </location>
</feature>
<feature type="binding site" evidence="1">
    <location>
        <position position="114"/>
    </location>
    <ligand>
        <name>[4Fe-4S] cluster</name>
        <dbReference type="ChEBI" id="CHEBI:49883"/>
        <note>4Fe-4S-S-AdoMet</note>
    </ligand>
</feature>
<feature type="binding site" evidence="1">
    <location>
        <position position="118"/>
    </location>
    <ligand>
        <name>[4Fe-4S] cluster</name>
        <dbReference type="ChEBI" id="CHEBI:49883"/>
        <note>4Fe-4S-S-AdoMet</note>
    </ligand>
</feature>
<feature type="binding site" evidence="1">
    <location>
        <position position="121"/>
    </location>
    <ligand>
        <name>[4Fe-4S] cluster</name>
        <dbReference type="ChEBI" id="CHEBI:49883"/>
        <note>4Fe-4S-S-AdoMet</note>
    </ligand>
</feature>
<feature type="binding site" evidence="1">
    <location>
        <begin position="159"/>
        <end position="160"/>
    </location>
    <ligand>
        <name>S-adenosyl-L-methionine</name>
        <dbReference type="ChEBI" id="CHEBI:59789"/>
    </ligand>
</feature>
<feature type="binding site" evidence="1">
    <location>
        <position position="191"/>
    </location>
    <ligand>
        <name>S-adenosyl-L-methionine</name>
        <dbReference type="ChEBI" id="CHEBI:59789"/>
    </ligand>
</feature>
<feature type="binding site" evidence="1">
    <location>
        <begin position="213"/>
        <end position="215"/>
    </location>
    <ligand>
        <name>S-adenosyl-L-methionine</name>
        <dbReference type="ChEBI" id="CHEBI:59789"/>
    </ligand>
</feature>
<feature type="binding site" evidence="1">
    <location>
        <position position="289"/>
    </location>
    <ligand>
        <name>S-adenosyl-L-methionine</name>
        <dbReference type="ChEBI" id="CHEBI:59789"/>
    </ligand>
</feature>
<feature type="disulfide bond" description="(transient)" evidence="1">
    <location>
        <begin position="107"/>
        <end position="332"/>
    </location>
</feature>
<organism>
    <name type="scientific">Phocaeicola vulgatus (strain ATCC 8482 / DSM 1447 / JCM 5826 / CCUG 4940 / NBRC 14291 / NCTC 11154)</name>
    <name type="common">Bacteroides vulgatus</name>
    <dbReference type="NCBI Taxonomy" id="435590"/>
    <lineage>
        <taxon>Bacteria</taxon>
        <taxon>Pseudomonadati</taxon>
        <taxon>Bacteroidota</taxon>
        <taxon>Bacteroidia</taxon>
        <taxon>Bacteroidales</taxon>
        <taxon>Bacteroidaceae</taxon>
        <taxon>Phocaeicola</taxon>
    </lineage>
</organism>
<comment type="function">
    <text evidence="1">Specifically methylates position 2 of adenine 2503 in 23S rRNA and position 2 of adenine 37 in tRNAs.</text>
</comment>
<comment type="catalytic activity">
    <reaction evidence="1">
        <text>adenosine(2503) in 23S rRNA + 2 reduced [2Fe-2S]-[ferredoxin] + 2 S-adenosyl-L-methionine = 2-methyladenosine(2503) in 23S rRNA + 5'-deoxyadenosine + L-methionine + 2 oxidized [2Fe-2S]-[ferredoxin] + S-adenosyl-L-homocysteine</text>
        <dbReference type="Rhea" id="RHEA:42916"/>
        <dbReference type="Rhea" id="RHEA-COMP:10000"/>
        <dbReference type="Rhea" id="RHEA-COMP:10001"/>
        <dbReference type="Rhea" id="RHEA-COMP:10152"/>
        <dbReference type="Rhea" id="RHEA-COMP:10282"/>
        <dbReference type="ChEBI" id="CHEBI:17319"/>
        <dbReference type="ChEBI" id="CHEBI:33737"/>
        <dbReference type="ChEBI" id="CHEBI:33738"/>
        <dbReference type="ChEBI" id="CHEBI:57844"/>
        <dbReference type="ChEBI" id="CHEBI:57856"/>
        <dbReference type="ChEBI" id="CHEBI:59789"/>
        <dbReference type="ChEBI" id="CHEBI:74411"/>
        <dbReference type="ChEBI" id="CHEBI:74497"/>
        <dbReference type="EC" id="2.1.1.192"/>
    </reaction>
</comment>
<comment type="catalytic activity">
    <reaction evidence="1">
        <text>adenosine(37) in tRNA + 2 reduced [2Fe-2S]-[ferredoxin] + 2 S-adenosyl-L-methionine = 2-methyladenosine(37) in tRNA + 5'-deoxyadenosine + L-methionine + 2 oxidized [2Fe-2S]-[ferredoxin] + S-adenosyl-L-homocysteine</text>
        <dbReference type="Rhea" id="RHEA:43332"/>
        <dbReference type="Rhea" id="RHEA-COMP:10000"/>
        <dbReference type="Rhea" id="RHEA-COMP:10001"/>
        <dbReference type="Rhea" id="RHEA-COMP:10162"/>
        <dbReference type="Rhea" id="RHEA-COMP:10485"/>
        <dbReference type="ChEBI" id="CHEBI:17319"/>
        <dbReference type="ChEBI" id="CHEBI:33737"/>
        <dbReference type="ChEBI" id="CHEBI:33738"/>
        <dbReference type="ChEBI" id="CHEBI:57844"/>
        <dbReference type="ChEBI" id="CHEBI:57856"/>
        <dbReference type="ChEBI" id="CHEBI:59789"/>
        <dbReference type="ChEBI" id="CHEBI:74411"/>
        <dbReference type="ChEBI" id="CHEBI:74497"/>
        <dbReference type="EC" id="2.1.1.192"/>
    </reaction>
</comment>
<comment type="cofactor">
    <cofactor evidence="1">
        <name>[4Fe-4S] cluster</name>
        <dbReference type="ChEBI" id="CHEBI:49883"/>
    </cofactor>
    <text evidence="1">Binds 1 [4Fe-4S] cluster. The cluster is coordinated with 3 cysteines and an exchangeable S-adenosyl-L-methionine.</text>
</comment>
<comment type="subcellular location">
    <subcellularLocation>
        <location evidence="1">Cytoplasm</location>
    </subcellularLocation>
</comment>
<comment type="miscellaneous">
    <text evidence="1">Reaction proceeds by a ping-pong mechanism involving intermediate methylation of a conserved cysteine residue.</text>
</comment>
<comment type="similarity">
    <text evidence="1">Belongs to the radical SAM superfamily. RlmN family.</text>
</comment>
<dbReference type="EC" id="2.1.1.192" evidence="1"/>
<dbReference type="EMBL" id="CP000139">
    <property type="protein sequence ID" value="ABR40253.1"/>
    <property type="molecule type" value="Genomic_DNA"/>
</dbReference>
<dbReference type="RefSeq" id="WP_005847329.1">
    <property type="nucleotide sequence ID" value="NZ_JANSWM010000107.1"/>
</dbReference>
<dbReference type="SMR" id="A6L3I9"/>
<dbReference type="STRING" id="435590.BVU_2598"/>
<dbReference type="PaxDb" id="435590-BVU_2598"/>
<dbReference type="GeneID" id="5303561"/>
<dbReference type="KEGG" id="bvu:BVU_2598"/>
<dbReference type="eggNOG" id="COG0820">
    <property type="taxonomic scope" value="Bacteria"/>
</dbReference>
<dbReference type="HOGENOM" id="CLU_029101_0_0_10"/>
<dbReference type="BioCyc" id="BVUL435590:G1G59-2702-MONOMER"/>
<dbReference type="Proteomes" id="UP000002861">
    <property type="component" value="Chromosome"/>
</dbReference>
<dbReference type="GO" id="GO:0005737">
    <property type="term" value="C:cytoplasm"/>
    <property type="evidence" value="ECO:0007669"/>
    <property type="project" value="UniProtKB-SubCell"/>
</dbReference>
<dbReference type="GO" id="GO:0051539">
    <property type="term" value="F:4 iron, 4 sulfur cluster binding"/>
    <property type="evidence" value="ECO:0007669"/>
    <property type="project" value="UniProtKB-UniRule"/>
</dbReference>
<dbReference type="GO" id="GO:0046872">
    <property type="term" value="F:metal ion binding"/>
    <property type="evidence" value="ECO:0007669"/>
    <property type="project" value="UniProtKB-KW"/>
</dbReference>
<dbReference type="GO" id="GO:0070040">
    <property type="term" value="F:rRNA (adenine(2503)-C2-)-methyltransferase activity"/>
    <property type="evidence" value="ECO:0007669"/>
    <property type="project" value="UniProtKB-UniRule"/>
</dbReference>
<dbReference type="GO" id="GO:0019843">
    <property type="term" value="F:rRNA binding"/>
    <property type="evidence" value="ECO:0007669"/>
    <property type="project" value="UniProtKB-UniRule"/>
</dbReference>
<dbReference type="GO" id="GO:0002935">
    <property type="term" value="F:tRNA (adenine(37)-C2)-methyltransferase activity"/>
    <property type="evidence" value="ECO:0007669"/>
    <property type="project" value="UniProtKB-UniRule"/>
</dbReference>
<dbReference type="GO" id="GO:0000049">
    <property type="term" value="F:tRNA binding"/>
    <property type="evidence" value="ECO:0007669"/>
    <property type="project" value="UniProtKB-UniRule"/>
</dbReference>
<dbReference type="GO" id="GO:0070475">
    <property type="term" value="P:rRNA base methylation"/>
    <property type="evidence" value="ECO:0007669"/>
    <property type="project" value="UniProtKB-UniRule"/>
</dbReference>
<dbReference type="GO" id="GO:0030488">
    <property type="term" value="P:tRNA methylation"/>
    <property type="evidence" value="ECO:0007669"/>
    <property type="project" value="UniProtKB-UniRule"/>
</dbReference>
<dbReference type="FunFam" id="3.20.20.70:FF:000014">
    <property type="entry name" value="Probable dual-specificity RNA methyltransferase RlmN"/>
    <property type="match status" value="1"/>
</dbReference>
<dbReference type="Gene3D" id="1.10.150.530">
    <property type="match status" value="1"/>
</dbReference>
<dbReference type="Gene3D" id="3.20.20.70">
    <property type="entry name" value="Aldolase class I"/>
    <property type="match status" value="1"/>
</dbReference>
<dbReference type="HAMAP" id="MF_01849">
    <property type="entry name" value="RNA_methyltr_RlmN"/>
    <property type="match status" value="1"/>
</dbReference>
<dbReference type="InterPro" id="IPR013785">
    <property type="entry name" value="Aldolase_TIM"/>
</dbReference>
<dbReference type="InterPro" id="IPR040072">
    <property type="entry name" value="Methyltransferase_A"/>
</dbReference>
<dbReference type="InterPro" id="IPR048641">
    <property type="entry name" value="RlmN_N"/>
</dbReference>
<dbReference type="InterPro" id="IPR027492">
    <property type="entry name" value="RNA_MTrfase_RlmN"/>
</dbReference>
<dbReference type="InterPro" id="IPR004383">
    <property type="entry name" value="rRNA_lsu_MTrfase_RlmN/Cfr"/>
</dbReference>
<dbReference type="InterPro" id="IPR007197">
    <property type="entry name" value="rSAM"/>
</dbReference>
<dbReference type="NCBIfam" id="TIGR00048">
    <property type="entry name" value="rRNA_mod_RlmN"/>
    <property type="match status" value="1"/>
</dbReference>
<dbReference type="PANTHER" id="PTHR30544">
    <property type="entry name" value="23S RRNA METHYLTRANSFERASE"/>
    <property type="match status" value="1"/>
</dbReference>
<dbReference type="PANTHER" id="PTHR30544:SF5">
    <property type="entry name" value="RADICAL SAM CORE DOMAIN-CONTAINING PROTEIN"/>
    <property type="match status" value="1"/>
</dbReference>
<dbReference type="Pfam" id="PF04055">
    <property type="entry name" value="Radical_SAM"/>
    <property type="match status" value="1"/>
</dbReference>
<dbReference type="Pfam" id="PF21016">
    <property type="entry name" value="RlmN_N"/>
    <property type="match status" value="1"/>
</dbReference>
<dbReference type="PIRSF" id="PIRSF006004">
    <property type="entry name" value="CHP00048"/>
    <property type="match status" value="1"/>
</dbReference>
<dbReference type="SFLD" id="SFLDF00275">
    <property type="entry name" value="adenosine_C2_methyltransferase"/>
    <property type="match status" value="1"/>
</dbReference>
<dbReference type="SFLD" id="SFLDS00029">
    <property type="entry name" value="Radical_SAM"/>
    <property type="match status" value="1"/>
</dbReference>
<dbReference type="SUPFAM" id="SSF102114">
    <property type="entry name" value="Radical SAM enzymes"/>
    <property type="match status" value="1"/>
</dbReference>
<dbReference type="PROSITE" id="PS51918">
    <property type="entry name" value="RADICAL_SAM"/>
    <property type="match status" value="1"/>
</dbReference>
<keyword id="KW-0004">4Fe-4S</keyword>
<keyword id="KW-0963">Cytoplasm</keyword>
<keyword id="KW-1015">Disulfide bond</keyword>
<keyword id="KW-0408">Iron</keyword>
<keyword id="KW-0411">Iron-sulfur</keyword>
<keyword id="KW-0479">Metal-binding</keyword>
<keyword id="KW-0489">Methyltransferase</keyword>
<keyword id="KW-0698">rRNA processing</keyword>
<keyword id="KW-0949">S-adenosyl-L-methionine</keyword>
<keyword id="KW-0808">Transferase</keyword>
<keyword id="KW-0819">tRNA processing</keyword>
<name>RLMN_PHOV8</name>
<protein>
    <recommendedName>
        <fullName evidence="1">Probable dual-specificity RNA methyltransferase RlmN</fullName>
        <ecNumber evidence="1">2.1.1.192</ecNumber>
    </recommendedName>
    <alternativeName>
        <fullName evidence="1">23S rRNA (adenine(2503)-C(2))-methyltransferase</fullName>
    </alternativeName>
    <alternativeName>
        <fullName evidence="1">23S rRNA m2A2503 methyltransferase</fullName>
    </alternativeName>
    <alternativeName>
        <fullName evidence="1">Ribosomal RNA large subunit methyltransferase N</fullName>
    </alternativeName>
    <alternativeName>
        <fullName evidence="1">tRNA (adenine(37)-C(2))-methyltransferase</fullName>
    </alternativeName>
    <alternativeName>
        <fullName evidence="1">tRNA m2A37 methyltransferase</fullName>
    </alternativeName>
</protein>
<evidence type="ECO:0000255" key="1">
    <source>
        <dbReference type="HAMAP-Rule" id="MF_01849"/>
    </source>
</evidence>
<evidence type="ECO:0000255" key="2">
    <source>
        <dbReference type="PROSITE-ProRule" id="PRU01266"/>
    </source>
</evidence>
<sequence>METPKTALLGRTLDEIQQIVRNLGMPKFAAKQITSWLYDKKVETIDEMTNLSLKHREALKEGYEVGASAPVEEMRSVDGTVKYLFRTPAHNFIEAVYIPDEDRATLCVSSQVGCKMNCKFCMTGKQGFTANLSAHQILNQIYSIPEREKLTNLVFMGMGEPFDNLDEVLKVLEILTSEYGYGWSPKRITVSSVGLKKGLERFLNESDCHLAISMHTPIPSQRRDLMPAEKAFSITEIIDILHNYDFSKQRRLSFEYIVFKGVNDSLIYAKEIVKLLRGIECRVNLIRFHAIPNVDLEGVDMETMVAFRDYLTQHGVFATIRASRGEDIFAACGMLSTAKQQKEKGVTLQ</sequence>